<organism>
    <name type="scientific">Desulforapulum autotrophicum (strain ATCC 43914 / DSM 3382 / VKM B-1955 / HRM2)</name>
    <name type="common">Desulfobacterium autotrophicum</name>
    <dbReference type="NCBI Taxonomy" id="177437"/>
    <lineage>
        <taxon>Bacteria</taxon>
        <taxon>Pseudomonadati</taxon>
        <taxon>Thermodesulfobacteriota</taxon>
        <taxon>Desulfobacteria</taxon>
        <taxon>Desulfobacterales</taxon>
        <taxon>Desulfobacteraceae</taxon>
        <taxon>Desulforapulum</taxon>
    </lineage>
</organism>
<keyword id="KW-0046">Antibiotic resistance</keyword>
<keyword id="KW-0997">Cell inner membrane</keyword>
<keyword id="KW-1003">Cell membrane</keyword>
<keyword id="KW-0133">Cell shape</keyword>
<keyword id="KW-0961">Cell wall biogenesis/degradation</keyword>
<keyword id="KW-0378">Hydrolase</keyword>
<keyword id="KW-0472">Membrane</keyword>
<keyword id="KW-0573">Peptidoglycan synthesis</keyword>
<keyword id="KW-1185">Reference proteome</keyword>
<keyword id="KW-0812">Transmembrane</keyword>
<keyword id="KW-1133">Transmembrane helix</keyword>
<accession>C0QC99</accession>
<name>UPPP_DESAH</name>
<sequence length="276" mass="29045">MELYQGVVLGVLQGLTEFLPVSSSGHLVLGQNFFGITEPALSFDISVHLGTLFAVALVFFKEIKAMVVSLGRLVQNLGSLKNFKQVVKADGDVRLAALIIVGSIPTAVIGLILKNYVHALFSSLVIVGSMLMVTGTFLWLTRHSTPGGKKVEQIGFGTALFIGVCQGVAVIPGISRSGATIAAGLFSGVERETAARYSFLLSMPAIAGAEILSLKESFATGAGFDTVTLLSTLTAFIVGTLALVALLKIVKKGRFYLFAPYCWVVGLISIIAGFVA</sequence>
<evidence type="ECO:0000255" key="1">
    <source>
        <dbReference type="HAMAP-Rule" id="MF_01006"/>
    </source>
</evidence>
<feature type="chain" id="PRO_1000213148" description="Undecaprenyl-diphosphatase">
    <location>
        <begin position="1"/>
        <end position="276"/>
    </location>
</feature>
<feature type="transmembrane region" description="Helical" evidence="1">
    <location>
        <begin position="1"/>
        <end position="21"/>
    </location>
</feature>
<feature type="transmembrane region" description="Helical" evidence="1">
    <location>
        <begin position="40"/>
        <end position="60"/>
    </location>
</feature>
<feature type="transmembrane region" description="Helical" evidence="1">
    <location>
        <begin position="93"/>
        <end position="113"/>
    </location>
</feature>
<feature type="transmembrane region" description="Helical" evidence="1">
    <location>
        <begin position="120"/>
        <end position="140"/>
    </location>
</feature>
<feature type="transmembrane region" description="Helical" evidence="1">
    <location>
        <begin position="154"/>
        <end position="174"/>
    </location>
</feature>
<feature type="transmembrane region" description="Helical" evidence="1">
    <location>
        <begin position="199"/>
        <end position="219"/>
    </location>
</feature>
<feature type="transmembrane region" description="Helical" evidence="1">
    <location>
        <begin position="227"/>
        <end position="247"/>
    </location>
</feature>
<feature type="transmembrane region" description="Helical" evidence="1">
    <location>
        <begin position="255"/>
        <end position="275"/>
    </location>
</feature>
<gene>
    <name evidence="1" type="primary">uppP</name>
    <name type="ordered locus">HRM2_40590</name>
</gene>
<reference key="1">
    <citation type="journal article" date="2009" name="Environ. Microbiol.">
        <title>Genome sequence of Desulfobacterium autotrophicum HRM2, a marine sulfate reducer oxidizing organic carbon completely to carbon dioxide.</title>
        <authorList>
            <person name="Strittmatter A.W."/>
            <person name="Liesegang H."/>
            <person name="Rabus R."/>
            <person name="Decker I."/>
            <person name="Amann J."/>
            <person name="Andres S."/>
            <person name="Henne A."/>
            <person name="Fricke W.F."/>
            <person name="Martinez-Arias R."/>
            <person name="Bartels D."/>
            <person name="Goesmann A."/>
            <person name="Krause L."/>
            <person name="Puehler A."/>
            <person name="Klenk H.P."/>
            <person name="Richter M."/>
            <person name="Schuler M."/>
            <person name="Gloeckner F.O."/>
            <person name="Meyerdierks A."/>
            <person name="Gottschalk G."/>
            <person name="Amann R."/>
        </authorList>
    </citation>
    <scope>NUCLEOTIDE SEQUENCE [LARGE SCALE GENOMIC DNA]</scope>
    <source>
        <strain>ATCC 43914 / DSM 3382 / VKM B-1955 / HRM2</strain>
    </source>
</reference>
<comment type="function">
    <text evidence="1">Catalyzes the dephosphorylation of undecaprenyl diphosphate (UPP). Confers resistance to bacitracin.</text>
</comment>
<comment type="catalytic activity">
    <reaction evidence="1">
        <text>di-trans,octa-cis-undecaprenyl diphosphate + H2O = di-trans,octa-cis-undecaprenyl phosphate + phosphate + H(+)</text>
        <dbReference type="Rhea" id="RHEA:28094"/>
        <dbReference type="ChEBI" id="CHEBI:15377"/>
        <dbReference type="ChEBI" id="CHEBI:15378"/>
        <dbReference type="ChEBI" id="CHEBI:43474"/>
        <dbReference type="ChEBI" id="CHEBI:58405"/>
        <dbReference type="ChEBI" id="CHEBI:60392"/>
        <dbReference type="EC" id="3.6.1.27"/>
    </reaction>
</comment>
<comment type="subcellular location">
    <subcellularLocation>
        <location evidence="1">Cell inner membrane</location>
        <topology evidence="1">Multi-pass membrane protein</topology>
    </subcellularLocation>
</comment>
<comment type="miscellaneous">
    <text>Bacitracin is thought to be involved in the inhibition of peptidoglycan synthesis by sequestering undecaprenyl diphosphate, thereby reducing the pool of lipid carrier available.</text>
</comment>
<comment type="similarity">
    <text evidence="1">Belongs to the UppP family.</text>
</comment>
<dbReference type="EC" id="3.6.1.27" evidence="1"/>
<dbReference type="EMBL" id="CP001087">
    <property type="protein sequence ID" value="ACN17116.1"/>
    <property type="molecule type" value="Genomic_DNA"/>
</dbReference>
<dbReference type="RefSeq" id="WP_015905849.1">
    <property type="nucleotide sequence ID" value="NC_012108.1"/>
</dbReference>
<dbReference type="SMR" id="C0QC99"/>
<dbReference type="STRING" id="177437.HRM2_40590"/>
<dbReference type="KEGG" id="dat:HRM2_40590"/>
<dbReference type="eggNOG" id="COG1968">
    <property type="taxonomic scope" value="Bacteria"/>
</dbReference>
<dbReference type="HOGENOM" id="CLU_060296_1_2_7"/>
<dbReference type="OrthoDB" id="9808289at2"/>
<dbReference type="Proteomes" id="UP000000442">
    <property type="component" value="Chromosome"/>
</dbReference>
<dbReference type="GO" id="GO:0005886">
    <property type="term" value="C:plasma membrane"/>
    <property type="evidence" value="ECO:0007669"/>
    <property type="project" value="UniProtKB-SubCell"/>
</dbReference>
<dbReference type="GO" id="GO:0050380">
    <property type="term" value="F:undecaprenyl-diphosphatase activity"/>
    <property type="evidence" value="ECO:0007669"/>
    <property type="project" value="UniProtKB-UniRule"/>
</dbReference>
<dbReference type="GO" id="GO:0071555">
    <property type="term" value="P:cell wall organization"/>
    <property type="evidence" value="ECO:0007669"/>
    <property type="project" value="UniProtKB-KW"/>
</dbReference>
<dbReference type="GO" id="GO:0009252">
    <property type="term" value="P:peptidoglycan biosynthetic process"/>
    <property type="evidence" value="ECO:0007669"/>
    <property type="project" value="UniProtKB-KW"/>
</dbReference>
<dbReference type="GO" id="GO:0008360">
    <property type="term" value="P:regulation of cell shape"/>
    <property type="evidence" value="ECO:0007669"/>
    <property type="project" value="UniProtKB-KW"/>
</dbReference>
<dbReference type="GO" id="GO:0046677">
    <property type="term" value="P:response to antibiotic"/>
    <property type="evidence" value="ECO:0007669"/>
    <property type="project" value="UniProtKB-UniRule"/>
</dbReference>
<dbReference type="HAMAP" id="MF_01006">
    <property type="entry name" value="Undec_diphosphatase"/>
    <property type="match status" value="1"/>
</dbReference>
<dbReference type="InterPro" id="IPR003824">
    <property type="entry name" value="UppP"/>
</dbReference>
<dbReference type="PANTHER" id="PTHR30622">
    <property type="entry name" value="UNDECAPRENYL-DIPHOSPHATASE"/>
    <property type="match status" value="1"/>
</dbReference>
<dbReference type="PANTHER" id="PTHR30622:SF2">
    <property type="entry name" value="UNDECAPRENYL-DIPHOSPHATASE"/>
    <property type="match status" value="1"/>
</dbReference>
<dbReference type="Pfam" id="PF02673">
    <property type="entry name" value="BacA"/>
    <property type="match status" value="1"/>
</dbReference>
<proteinExistence type="inferred from homology"/>
<protein>
    <recommendedName>
        <fullName evidence="1">Undecaprenyl-diphosphatase</fullName>
        <ecNumber evidence="1">3.6.1.27</ecNumber>
    </recommendedName>
    <alternativeName>
        <fullName evidence="1">Bacitracin resistance protein</fullName>
    </alternativeName>
    <alternativeName>
        <fullName evidence="1">Undecaprenyl pyrophosphate phosphatase</fullName>
    </alternativeName>
</protein>